<organism>
    <name type="scientific">Homo sapiens</name>
    <name type="common">Human</name>
    <dbReference type="NCBI Taxonomy" id="9606"/>
    <lineage>
        <taxon>Eukaryota</taxon>
        <taxon>Metazoa</taxon>
        <taxon>Chordata</taxon>
        <taxon>Craniata</taxon>
        <taxon>Vertebrata</taxon>
        <taxon>Euteleostomi</taxon>
        <taxon>Mammalia</taxon>
        <taxon>Eutheria</taxon>
        <taxon>Euarchontoglires</taxon>
        <taxon>Primates</taxon>
        <taxon>Haplorrhini</taxon>
        <taxon>Catarrhini</taxon>
        <taxon>Hominidae</taxon>
        <taxon>Homo</taxon>
    </lineage>
</organism>
<reference key="1">
    <citation type="journal article" date="2000" name="Genome Res.">
        <title>Cloning and functional analysis of cDNAs with open reading frames for 300 previously undefined genes expressed in CD34+ hematopoietic stem/progenitor cells.</title>
        <authorList>
            <person name="Zhang Q.-H."/>
            <person name="Ye M."/>
            <person name="Wu X.-Y."/>
            <person name="Ren S.-X."/>
            <person name="Zhao M."/>
            <person name="Zhao C.-J."/>
            <person name="Fu G."/>
            <person name="Shen Y."/>
            <person name="Fan H.-Y."/>
            <person name="Lu G."/>
            <person name="Zhong M."/>
            <person name="Xu X.-R."/>
            <person name="Han Z.-G."/>
            <person name="Zhang J.-W."/>
            <person name="Tao J."/>
            <person name="Huang Q.-H."/>
            <person name="Zhou J."/>
            <person name="Hu G.-X."/>
            <person name="Gu J."/>
            <person name="Chen S.-J."/>
            <person name="Chen Z."/>
        </authorList>
    </citation>
    <scope>NUCLEOTIDE SEQUENCE [LARGE SCALE MRNA] (ISOFORM 4)</scope>
    <source>
        <tissue>Umbilical cord blood</tissue>
    </source>
</reference>
<reference key="2">
    <citation type="journal article" date="2005" name="Nature">
        <title>Generation and annotation of the DNA sequences of human chromosomes 2 and 4.</title>
        <authorList>
            <person name="Hillier L.W."/>
            <person name="Graves T.A."/>
            <person name="Fulton R.S."/>
            <person name="Fulton L.A."/>
            <person name="Pepin K.H."/>
            <person name="Minx P."/>
            <person name="Wagner-McPherson C."/>
            <person name="Layman D."/>
            <person name="Wylie K."/>
            <person name="Sekhon M."/>
            <person name="Becker M.C."/>
            <person name="Fewell G.A."/>
            <person name="Delehaunty K.D."/>
            <person name="Miner T.L."/>
            <person name="Nash W.E."/>
            <person name="Kremitzki C."/>
            <person name="Oddy L."/>
            <person name="Du H."/>
            <person name="Sun H."/>
            <person name="Bradshaw-Cordum H."/>
            <person name="Ali J."/>
            <person name="Carter J."/>
            <person name="Cordes M."/>
            <person name="Harris A."/>
            <person name="Isak A."/>
            <person name="van Brunt A."/>
            <person name="Nguyen C."/>
            <person name="Du F."/>
            <person name="Courtney L."/>
            <person name="Kalicki J."/>
            <person name="Ozersky P."/>
            <person name="Abbott S."/>
            <person name="Armstrong J."/>
            <person name="Belter E.A."/>
            <person name="Caruso L."/>
            <person name="Cedroni M."/>
            <person name="Cotton M."/>
            <person name="Davidson T."/>
            <person name="Desai A."/>
            <person name="Elliott G."/>
            <person name="Erb T."/>
            <person name="Fronick C."/>
            <person name="Gaige T."/>
            <person name="Haakenson W."/>
            <person name="Haglund K."/>
            <person name="Holmes A."/>
            <person name="Harkins R."/>
            <person name="Kim K."/>
            <person name="Kruchowski S.S."/>
            <person name="Strong C.M."/>
            <person name="Grewal N."/>
            <person name="Goyea E."/>
            <person name="Hou S."/>
            <person name="Levy A."/>
            <person name="Martinka S."/>
            <person name="Mead K."/>
            <person name="McLellan M.D."/>
            <person name="Meyer R."/>
            <person name="Randall-Maher J."/>
            <person name="Tomlinson C."/>
            <person name="Dauphin-Kohlberg S."/>
            <person name="Kozlowicz-Reilly A."/>
            <person name="Shah N."/>
            <person name="Swearengen-Shahid S."/>
            <person name="Snider J."/>
            <person name="Strong J.T."/>
            <person name="Thompson J."/>
            <person name="Yoakum M."/>
            <person name="Leonard S."/>
            <person name="Pearman C."/>
            <person name="Trani L."/>
            <person name="Radionenko M."/>
            <person name="Waligorski J.E."/>
            <person name="Wang C."/>
            <person name="Rock S.M."/>
            <person name="Tin-Wollam A.-M."/>
            <person name="Maupin R."/>
            <person name="Latreille P."/>
            <person name="Wendl M.C."/>
            <person name="Yang S.-P."/>
            <person name="Pohl C."/>
            <person name="Wallis J.W."/>
            <person name="Spieth J."/>
            <person name="Bieri T.A."/>
            <person name="Berkowicz N."/>
            <person name="Nelson J.O."/>
            <person name="Osborne J."/>
            <person name="Ding L."/>
            <person name="Meyer R."/>
            <person name="Sabo A."/>
            <person name="Shotland Y."/>
            <person name="Sinha P."/>
            <person name="Wohldmann P.E."/>
            <person name="Cook L.L."/>
            <person name="Hickenbotham M.T."/>
            <person name="Eldred J."/>
            <person name="Williams D."/>
            <person name="Jones T.A."/>
            <person name="She X."/>
            <person name="Ciccarelli F.D."/>
            <person name="Izaurralde E."/>
            <person name="Taylor J."/>
            <person name="Schmutz J."/>
            <person name="Myers R.M."/>
            <person name="Cox D.R."/>
            <person name="Huang X."/>
            <person name="McPherson J.D."/>
            <person name="Mardis E.R."/>
            <person name="Clifton S.W."/>
            <person name="Warren W.C."/>
            <person name="Chinwalla A.T."/>
            <person name="Eddy S.R."/>
            <person name="Marra M.A."/>
            <person name="Ovcharenko I."/>
            <person name="Furey T.S."/>
            <person name="Miller W."/>
            <person name="Eichler E.E."/>
            <person name="Bork P."/>
            <person name="Suyama M."/>
            <person name="Torrents D."/>
            <person name="Waterston R.H."/>
            <person name="Wilson R.K."/>
        </authorList>
    </citation>
    <scope>NUCLEOTIDE SEQUENCE [LARGE SCALE GENOMIC DNA]</scope>
</reference>
<reference key="3">
    <citation type="journal article" date="2004" name="Genome Res.">
        <title>The status, quality, and expansion of the NIH full-length cDNA project: the Mammalian Gene Collection (MGC).</title>
        <authorList>
            <consortium name="The MGC Project Team"/>
        </authorList>
    </citation>
    <scope>NUCLEOTIDE SEQUENCE [LARGE SCALE MRNA] (ISOFORM 2)</scope>
    <scope>NUCLEOTIDE SEQUENCE [LARGE SCALE MRNA] OF 162-679 (ISOFORM 3)</scope>
    <source>
        <tissue>Skin</tissue>
    </source>
</reference>
<protein>
    <recommendedName>
        <fullName evidence="2">Protein FAM178B</fullName>
    </recommendedName>
</protein>
<keyword id="KW-0025">Alternative splicing</keyword>
<keyword id="KW-1267">Proteomics identification</keyword>
<keyword id="KW-1185">Reference proteome</keyword>
<gene>
    <name evidence="3" type="primary">FAM178B</name>
    <name type="ORF">HSPC234</name>
</gene>
<name>F178B_HUMAN</name>
<evidence type="ECO:0000256" key="1">
    <source>
        <dbReference type="SAM" id="MobiDB-lite"/>
    </source>
</evidence>
<evidence type="ECO:0000305" key="2"/>
<evidence type="ECO:0000312" key="3">
    <source>
        <dbReference type="HGNC" id="HGNC:28036"/>
    </source>
</evidence>
<comment type="alternative products">
    <event type="alternative splicing"/>
    <isoform>
        <id>Q8IXR5-3</id>
        <name>3</name>
        <sequence type="displayed"/>
    </isoform>
    <isoform>
        <id>Q8IXR5-2</id>
        <name>2</name>
        <sequence type="described" ref="VSP_060401"/>
    </isoform>
    <isoform>
        <id>Q8IXR5-4</id>
        <name>4</name>
        <sequence type="described" ref="VSP_060402 VSP_060403"/>
    </isoform>
</comment>
<comment type="similarity">
    <text evidence="2">Belongs to the FAM178 family.</text>
</comment>
<comment type="sequence caution" evidence="2">
    <conflict type="frameshift">
        <sequence resource="EMBL-CDS" id="AAF36154"/>
    </conflict>
</comment>
<accession>Q8IXR5</accession>
<accession>A8MXN2</accession>
<accession>E9PD86</accession>
<accession>Q8IUY0</accession>
<accession>Q9P0P4</accession>
<dbReference type="EMBL" id="AF151068">
    <property type="protein sequence ID" value="AAF36154.1"/>
    <property type="status" value="ALT_FRAME"/>
    <property type="molecule type" value="mRNA"/>
</dbReference>
<dbReference type="EMBL" id="AC079395">
    <property type="status" value="NOT_ANNOTATED_CDS"/>
    <property type="molecule type" value="Genomic_DNA"/>
</dbReference>
<dbReference type="EMBL" id="AC092636">
    <property type="protein sequence ID" value="AAY14968.1"/>
    <property type="molecule type" value="Genomic_DNA"/>
</dbReference>
<dbReference type="EMBL" id="BC038583">
    <property type="protein sequence ID" value="AAH38583.3"/>
    <property type="molecule type" value="mRNA"/>
</dbReference>
<dbReference type="EMBL" id="BC039488">
    <property type="protein sequence ID" value="AAH39488.1"/>
    <property type="molecule type" value="mRNA"/>
</dbReference>
<dbReference type="EMBL" id="BC051379">
    <property type="protein sequence ID" value="AAH51379.1"/>
    <property type="molecule type" value="mRNA"/>
</dbReference>
<dbReference type="CCDS" id="CCDS33252.1">
    <molecule id="Q8IXR5-2"/>
</dbReference>
<dbReference type="CCDS" id="CCDS46366.2">
    <molecule id="Q8IXR5-3"/>
</dbReference>
<dbReference type="RefSeq" id="NP_001116118.2">
    <molecule id="Q8IXR5-3"/>
    <property type="nucleotide sequence ID" value="NM_001122646.3"/>
</dbReference>
<dbReference type="RefSeq" id="NP_001166138.1">
    <molecule id="Q8IXR5-4"/>
    <property type="nucleotide sequence ID" value="NM_001172667.2"/>
</dbReference>
<dbReference type="RefSeq" id="NP_057574.2">
    <molecule id="Q8IXR5-2"/>
    <property type="nucleotide sequence ID" value="NM_016490.4"/>
</dbReference>
<dbReference type="RefSeq" id="XP_016859757.1">
    <property type="nucleotide sequence ID" value="XM_017004268.1"/>
</dbReference>
<dbReference type="SMR" id="Q8IXR5"/>
<dbReference type="BioGRID" id="119409">
    <property type="interactions" value="2"/>
</dbReference>
<dbReference type="FunCoup" id="Q8IXR5">
    <property type="interactions" value="29"/>
</dbReference>
<dbReference type="IntAct" id="Q8IXR5">
    <property type="interactions" value="2"/>
</dbReference>
<dbReference type="STRING" id="9606.ENSP00000429896"/>
<dbReference type="GlyGen" id="Q8IXR5">
    <property type="glycosylation" value="1 site"/>
</dbReference>
<dbReference type="iPTMnet" id="Q8IXR5"/>
<dbReference type="PhosphoSitePlus" id="Q8IXR5"/>
<dbReference type="BioMuta" id="FAM178B"/>
<dbReference type="DMDM" id="172045738"/>
<dbReference type="MassIVE" id="Q8IXR5"/>
<dbReference type="PaxDb" id="9606-ENSP00000429896"/>
<dbReference type="PeptideAtlas" id="Q8IXR5"/>
<dbReference type="ProteomicsDB" id="19608"/>
<dbReference type="ProteomicsDB" id="71051">
    <molecule id="Q8IXR5-2"/>
</dbReference>
<dbReference type="Pumba" id="Q8IXR5"/>
<dbReference type="Antibodypedia" id="47509">
    <property type="antibodies" value="22 antibodies from 10 providers"/>
</dbReference>
<dbReference type="DNASU" id="51252"/>
<dbReference type="Ensembl" id="ENST00000393526.6">
    <molecule id="Q8IXR5-2"/>
    <property type="protein sequence ID" value="ENSP00000377160.2"/>
    <property type="gene ID" value="ENSG00000168754.15"/>
</dbReference>
<dbReference type="Ensembl" id="ENST00000490605.3">
    <molecule id="Q8IXR5-3"/>
    <property type="protein sequence ID" value="ENSP00000429896.1"/>
    <property type="gene ID" value="ENSG00000168754.15"/>
</dbReference>
<dbReference type="GeneID" id="51252"/>
<dbReference type="KEGG" id="hsa:51252"/>
<dbReference type="MANE-Select" id="ENST00000490605.3">
    <property type="protein sequence ID" value="ENSP00000429896.1"/>
    <property type="RefSeq nucleotide sequence ID" value="NM_001122646.3"/>
    <property type="RefSeq protein sequence ID" value="NP_001116118.2"/>
</dbReference>
<dbReference type="UCSC" id="uc002sxj.4">
    <molecule id="Q8IXR5-3"/>
    <property type="organism name" value="human"/>
</dbReference>
<dbReference type="AGR" id="HGNC:28036"/>
<dbReference type="CTD" id="51252"/>
<dbReference type="DisGeNET" id="51252"/>
<dbReference type="GeneCards" id="FAM178B"/>
<dbReference type="HGNC" id="HGNC:28036">
    <property type="gene designation" value="FAM178B"/>
</dbReference>
<dbReference type="HPA" id="ENSG00000168754">
    <property type="expression patterns" value="Group enriched (bone marrow, brain, epididymis, lymphoid tissue, testis)"/>
</dbReference>
<dbReference type="neXtProt" id="NX_Q8IXR5"/>
<dbReference type="OpenTargets" id="ENSG00000168754"/>
<dbReference type="PharmGKB" id="PA162387456"/>
<dbReference type="VEuPathDB" id="HostDB:ENSG00000168754"/>
<dbReference type="eggNOG" id="ENOG502RXJ9">
    <property type="taxonomic scope" value="Eukaryota"/>
</dbReference>
<dbReference type="GeneTree" id="ENSGT00530000064017"/>
<dbReference type="HOGENOM" id="CLU_166950_0_0_1"/>
<dbReference type="InParanoid" id="Q8IXR5"/>
<dbReference type="OMA" id="QAMHRTR"/>
<dbReference type="OrthoDB" id="6158547at2759"/>
<dbReference type="PAN-GO" id="Q8IXR5">
    <property type="GO annotations" value="0 GO annotations based on evolutionary models"/>
</dbReference>
<dbReference type="PhylomeDB" id="Q8IXR5"/>
<dbReference type="TreeFam" id="TF332216"/>
<dbReference type="PathwayCommons" id="Q8IXR5"/>
<dbReference type="SignaLink" id="Q8IXR5"/>
<dbReference type="BioGRID-ORCS" id="51252">
    <property type="hits" value="9 hits in 1155 CRISPR screens"/>
</dbReference>
<dbReference type="ChiTaRS" id="FAM178B">
    <property type="organism name" value="human"/>
</dbReference>
<dbReference type="GenomeRNAi" id="51252"/>
<dbReference type="Pharos" id="Q8IXR5">
    <property type="development level" value="Tdark"/>
</dbReference>
<dbReference type="PRO" id="PR:Q8IXR5"/>
<dbReference type="Proteomes" id="UP000005640">
    <property type="component" value="Chromosome 2"/>
</dbReference>
<dbReference type="RNAct" id="Q8IXR5">
    <property type="molecule type" value="protein"/>
</dbReference>
<dbReference type="Bgee" id="ENSG00000168754">
    <property type="expression patterns" value="Expressed in C1 segment of cervical spinal cord and 135 other cell types or tissues"/>
</dbReference>
<dbReference type="InterPro" id="IPR044276">
    <property type="entry name" value="CANIN_dom"/>
</dbReference>
<dbReference type="InterPro" id="IPR026161">
    <property type="entry name" value="FAM178"/>
</dbReference>
<dbReference type="PANTHER" id="PTHR16046:SF11">
    <property type="entry name" value="PROTEIN FAM178B"/>
    <property type="match status" value="1"/>
</dbReference>
<dbReference type="PANTHER" id="PTHR16046">
    <property type="entry name" value="SMC5-SMC6 COMPLEX LOCALIZATION FACTOR 2"/>
    <property type="match status" value="1"/>
</dbReference>
<dbReference type="Pfam" id="PF14816">
    <property type="entry name" value="CANIN"/>
    <property type="match status" value="1"/>
</dbReference>
<sequence>MWPRLPGAGLAPQLRRQDQRLHFTGQMSHGLQMAGPQETVLALPLREGVQAAATVPILLYNLEDGLSDHPLDQGPRCPARRPCSPASAPAPTSPKKPKIQAPGETFPTDWSPPPVEFLNPRVLQASREAPAQRWVGVVGPQGLRRLAGELPEELEQEHLDLDPKRGLALPEKLFWNTSGLSQQAAAPEFSWGGSGSYFNNLDYLLQEKREQALEQERERLLLQECLNLNSLDLDEEEVPLTPEHRMLVEKYSVSLQTIPPVHPGETVFLPRCHPLPCILDSSLLKPRSHLEGLFLSSPPAQQLSFLRSGLLNILYLHMPDCPVSLLQWLFQLLTWPPETSLGAFGLLWDLIVDGIFLQPDEDKHLWCPSLQEVREAFHSLGAHSPALYPLGPFWHGGRVLPGEAGLNENEEQDAPQEIALDISLGHIYKFLALCAQAQPGAYTDENLMGLIELLCRTSLDVGLRLLPKVDLQQLLLLLLENIREWPGKLQELCCTLSWVSDHHHNLLALVQFFPDMTSRSRRLRSQLSLVVIARMLGQQEMLPLWQEKTQLSSLSRLLGLMRPSSLRQYLDSVPLPPCQEQQPKASAELDHKACYLCHSLLMLAGVVVSCQDITPDQWGELQLLCMQLDRHISTQIRESPQAMHRTMLKDLATQTYIRWQELLTHCQPQAQYFSPWKDI</sequence>
<feature type="chain" id="PRO_0000320193" description="Protein FAM178B">
    <location>
        <begin position="1"/>
        <end position="679"/>
    </location>
</feature>
<feature type="region of interest" description="Disordered" evidence="1">
    <location>
        <begin position="70"/>
        <end position="113"/>
    </location>
</feature>
<feature type="compositionally biased region" description="Low complexity" evidence="1">
    <location>
        <begin position="75"/>
        <end position="90"/>
    </location>
</feature>
<feature type="splice variant" id="VSP_060401" description="In isoform 2.">
    <location>
        <begin position="1"/>
        <end position="560"/>
    </location>
</feature>
<feature type="splice variant" id="VSP_060402" description="In isoform 4.">
    <location>
        <begin position="1"/>
        <end position="541"/>
    </location>
</feature>
<feature type="splice variant" id="VSP_060403" description="In isoform 4.">
    <original>LPLWQEKTQ</original>
    <variation>MKMMVVLLM</variation>
    <location>
        <begin position="542"/>
        <end position="550"/>
    </location>
</feature>
<feature type="sequence variant" id="VAR_039172" description="In dbSNP:rs34013660.">
    <original>R</original>
    <variation>C</variation>
    <location>
        <position position="645"/>
    </location>
</feature>
<feature type="sequence conflict" description="In Ref. 1; AAF36154." evidence="2" ref="1">
    <original>P</original>
    <variation>H</variation>
    <location>
        <position position="563"/>
    </location>
</feature>
<feature type="sequence conflict" description="In Ref. 1; AAF36154." evidence="2" ref="1">
    <original>T</original>
    <variation>P</variation>
    <location>
        <position position="646"/>
    </location>
</feature>
<proteinExistence type="evidence at protein level"/>